<organism>
    <name type="scientific">Schizosaccharomyces pombe (strain 972 / ATCC 24843)</name>
    <name type="common">Fission yeast</name>
    <dbReference type="NCBI Taxonomy" id="284812"/>
    <lineage>
        <taxon>Eukaryota</taxon>
        <taxon>Fungi</taxon>
        <taxon>Dikarya</taxon>
        <taxon>Ascomycota</taxon>
        <taxon>Taphrinomycotina</taxon>
        <taxon>Schizosaccharomycetes</taxon>
        <taxon>Schizosaccharomycetales</taxon>
        <taxon>Schizosaccharomycetaceae</taxon>
        <taxon>Schizosaccharomyces</taxon>
    </lineage>
</organism>
<keyword id="KW-0963">Cytoplasm</keyword>
<keyword id="KW-0539">Nucleus</keyword>
<keyword id="KW-0597">Phosphoprotein</keyword>
<keyword id="KW-1185">Reference proteome</keyword>
<name>YD42_SCHPO</name>
<feature type="chain" id="PRO_0000116578" description="Uncharacterized protein C22H10.02">
    <location>
        <begin position="1"/>
        <end position="138"/>
    </location>
</feature>
<feature type="modified residue" description="Phosphoserine" evidence="2">
    <location>
        <position position="110"/>
    </location>
</feature>
<protein>
    <recommendedName>
        <fullName>Uncharacterized protein C22H10.02</fullName>
    </recommendedName>
</protein>
<evidence type="ECO:0000269" key="1">
    <source>
    </source>
</evidence>
<evidence type="ECO:0000269" key="2">
    <source>
    </source>
</evidence>
<proteinExistence type="evidence at protein level"/>
<gene>
    <name type="ORF">SPAC22H10.02</name>
</gene>
<reference key="1">
    <citation type="journal article" date="2002" name="Nature">
        <title>The genome sequence of Schizosaccharomyces pombe.</title>
        <authorList>
            <person name="Wood V."/>
            <person name="Gwilliam R."/>
            <person name="Rajandream M.A."/>
            <person name="Lyne M.H."/>
            <person name="Lyne R."/>
            <person name="Stewart A."/>
            <person name="Sgouros J.G."/>
            <person name="Peat N."/>
            <person name="Hayles J."/>
            <person name="Baker S.G."/>
            <person name="Basham D."/>
            <person name="Bowman S."/>
            <person name="Brooks K."/>
            <person name="Brown D."/>
            <person name="Brown S."/>
            <person name="Chillingworth T."/>
            <person name="Churcher C.M."/>
            <person name="Collins M."/>
            <person name="Connor R."/>
            <person name="Cronin A."/>
            <person name="Davis P."/>
            <person name="Feltwell T."/>
            <person name="Fraser A."/>
            <person name="Gentles S."/>
            <person name="Goble A."/>
            <person name="Hamlin N."/>
            <person name="Harris D.E."/>
            <person name="Hidalgo J."/>
            <person name="Hodgson G."/>
            <person name="Holroyd S."/>
            <person name="Hornsby T."/>
            <person name="Howarth S."/>
            <person name="Huckle E.J."/>
            <person name="Hunt S."/>
            <person name="Jagels K."/>
            <person name="James K.D."/>
            <person name="Jones L."/>
            <person name="Jones M."/>
            <person name="Leather S."/>
            <person name="McDonald S."/>
            <person name="McLean J."/>
            <person name="Mooney P."/>
            <person name="Moule S."/>
            <person name="Mungall K.L."/>
            <person name="Murphy L.D."/>
            <person name="Niblett D."/>
            <person name="Odell C."/>
            <person name="Oliver K."/>
            <person name="O'Neil S."/>
            <person name="Pearson D."/>
            <person name="Quail M.A."/>
            <person name="Rabbinowitsch E."/>
            <person name="Rutherford K.M."/>
            <person name="Rutter S."/>
            <person name="Saunders D."/>
            <person name="Seeger K."/>
            <person name="Sharp S."/>
            <person name="Skelton J."/>
            <person name="Simmonds M.N."/>
            <person name="Squares R."/>
            <person name="Squares S."/>
            <person name="Stevens K."/>
            <person name="Taylor K."/>
            <person name="Taylor R.G."/>
            <person name="Tivey A."/>
            <person name="Walsh S.V."/>
            <person name="Warren T."/>
            <person name="Whitehead S."/>
            <person name="Woodward J.R."/>
            <person name="Volckaert G."/>
            <person name="Aert R."/>
            <person name="Robben J."/>
            <person name="Grymonprez B."/>
            <person name="Weltjens I."/>
            <person name="Vanstreels E."/>
            <person name="Rieger M."/>
            <person name="Schaefer M."/>
            <person name="Mueller-Auer S."/>
            <person name="Gabel C."/>
            <person name="Fuchs M."/>
            <person name="Duesterhoeft A."/>
            <person name="Fritzc C."/>
            <person name="Holzer E."/>
            <person name="Moestl D."/>
            <person name="Hilbert H."/>
            <person name="Borzym K."/>
            <person name="Langer I."/>
            <person name="Beck A."/>
            <person name="Lehrach H."/>
            <person name="Reinhardt R."/>
            <person name="Pohl T.M."/>
            <person name="Eger P."/>
            <person name="Zimmermann W."/>
            <person name="Wedler H."/>
            <person name="Wambutt R."/>
            <person name="Purnelle B."/>
            <person name="Goffeau A."/>
            <person name="Cadieu E."/>
            <person name="Dreano S."/>
            <person name="Gloux S."/>
            <person name="Lelaure V."/>
            <person name="Mottier S."/>
            <person name="Galibert F."/>
            <person name="Aves S.J."/>
            <person name="Xiang Z."/>
            <person name="Hunt C."/>
            <person name="Moore K."/>
            <person name="Hurst S.M."/>
            <person name="Lucas M."/>
            <person name="Rochet M."/>
            <person name="Gaillardin C."/>
            <person name="Tallada V.A."/>
            <person name="Garzon A."/>
            <person name="Thode G."/>
            <person name="Daga R.R."/>
            <person name="Cruzado L."/>
            <person name="Jimenez J."/>
            <person name="Sanchez M."/>
            <person name="del Rey F."/>
            <person name="Benito J."/>
            <person name="Dominguez A."/>
            <person name="Revuelta J.L."/>
            <person name="Moreno S."/>
            <person name="Armstrong J."/>
            <person name="Forsburg S.L."/>
            <person name="Cerutti L."/>
            <person name="Lowe T."/>
            <person name="McCombie W.R."/>
            <person name="Paulsen I."/>
            <person name="Potashkin J."/>
            <person name="Shpakovski G.V."/>
            <person name="Ussery D."/>
            <person name="Barrell B.G."/>
            <person name="Nurse P."/>
        </authorList>
    </citation>
    <scope>NUCLEOTIDE SEQUENCE [LARGE SCALE GENOMIC DNA]</scope>
    <source>
        <strain>972 / ATCC 24843</strain>
    </source>
</reference>
<reference key="2">
    <citation type="journal article" date="2011" name="Science">
        <title>Comparative functional genomics of the fission yeasts.</title>
        <authorList>
            <person name="Rhind N."/>
            <person name="Chen Z."/>
            <person name="Yassour M."/>
            <person name="Thompson D.A."/>
            <person name="Haas B.J."/>
            <person name="Habib N."/>
            <person name="Wapinski I."/>
            <person name="Roy S."/>
            <person name="Lin M.F."/>
            <person name="Heiman D.I."/>
            <person name="Young S.K."/>
            <person name="Furuya K."/>
            <person name="Guo Y."/>
            <person name="Pidoux A."/>
            <person name="Chen H.M."/>
            <person name="Robbertse B."/>
            <person name="Goldberg J.M."/>
            <person name="Aoki K."/>
            <person name="Bayne E.H."/>
            <person name="Berlin A.M."/>
            <person name="Desjardins C.A."/>
            <person name="Dobbs E."/>
            <person name="Dukaj L."/>
            <person name="Fan L."/>
            <person name="FitzGerald M.G."/>
            <person name="French C."/>
            <person name="Gujja S."/>
            <person name="Hansen K."/>
            <person name="Keifenheim D."/>
            <person name="Levin J.Z."/>
            <person name="Mosher R.A."/>
            <person name="Mueller C.A."/>
            <person name="Pfiffner J."/>
            <person name="Priest M."/>
            <person name="Russ C."/>
            <person name="Smialowska A."/>
            <person name="Swoboda P."/>
            <person name="Sykes S.M."/>
            <person name="Vaughn M."/>
            <person name="Vengrova S."/>
            <person name="Yoder R."/>
            <person name="Zeng Q."/>
            <person name="Allshire R."/>
            <person name="Baulcombe D."/>
            <person name="Birren B.W."/>
            <person name="Brown W."/>
            <person name="Ekwall K."/>
            <person name="Kellis M."/>
            <person name="Leatherwood J."/>
            <person name="Levin H."/>
            <person name="Margalit H."/>
            <person name="Martienssen R."/>
            <person name="Nieduszynski C.A."/>
            <person name="Spatafora J.W."/>
            <person name="Friedman N."/>
            <person name="Dalgaard J.Z."/>
            <person name="Baumann P."/>
            <person name="Niki H."/>
            <person name="Regev A."/>
            <person name="Nusbaum C."/>
        </authorList>
    </citation>
    <scope>REVISION OF GENE MODEL</scope>
</reference>
<reference key="3">
    <citation type="journal article" date="2006" name="Nat. Biotechnol.">
        <title>ORFeome cloning and global analysis of protein localization in the fission yeast Schizosaccharomyces pombe.</title>
        <authorList>
            <person name="Matsuyama A."/>
            <person name="Arai R."/>
            <person name="Yashiroda Y."/>
            <person name="Shirai A."/>
            <person name="Kamata A."/>
            <person name="Sekido S."/>
            <person name="Kobayashi Y."/>
            <person name="Hashimoto A."/>
            <person name="Hamamoto M."/>
            <person name="Hiraoka Y."/>
            <person name="Horinouchi S."/>
            <person name="Yoshida M."/>
        </authorList>
    </citation>
    <scope>SUBCELLULAR LOCATION [LARGE SCALE ANALYSIS]</scope>
</reference>
<reference key="4">
    <citation type="journal article" date="2008" name="J. Proteome Res.">
        <title>Phosphoproteome analysis of fission yeast.</title>
        <authorList>
            <person name="Wilson-Grady J.T."/>
            <person name="Villen J."/>
            <person name="Gygi S.P."/>
        </authorList>
    </citation>
    <scope>PHOSPHORYLATION [LARGE SCALE ANALYSIS] AT SER-110</scope>
    <scope>IDENTIFICATION BY MASS SPECTROMETRY</scope>
</reference>
<accession>Q10296</accession>
<sequence>MAFYYKNNLGYQNIPYGYQLNDFRASFEKARTFDMEDDLEFCPSLSDEELVSIYQSTGLSPTSSSPSLSPMTPNLYPNVLPNVHPGVSNYTHHPLSGLHQNVGSRTRKSSGIPIIDPVTRAPAVLAGAVSSSRAKQMW</sequence>
<dbReference type="EMBL" id="CU329670">
    <property type="protein sequence ID" value="CAA93603.2"/>
    <property type="molecule type" value="Genomic_DNA"/>
</dbReference>
<dbReference type="PIR" id="T38204">
    <property type="entry name" value="T38204"/>
</dbReference>
<dbReference type="RefSeq" id="NP_593738.2">
    <property type="nucleotide sequence ID" value="NM_001019169.2"/>
</dbReference>
<dbReference type="BioGRID" id="278284">
    <property type="interactions" value="21"/>
</dbReference>
<dbReference type="iPTMnet" id="Q10296"/>
<dbReference type="PaxDb" id="4896-SPAC22H10.02.1"/>
<dbReference type="EnsemblFungi" id="SPAC22H10.02.1">
    <property type="protein sequence ID" value="SPAC22H10.02.1:pep"/>
    <property type="gene ID" value="SPAC22H10.02"/>
</dbReference>
<dbReference type="KEGG" id="spo:2541793"/>
<dbReference type="PomBase" id="SPAC22H10.02"/>
<dbReference type="VEuPathDB" id="FungiDB:SPAC22H10.02"/>
<dbReference type="eggNOG" id="ENOG502S8I0">
    <property type="taxonomic scope" value="Eukaryota"/>
</dbReference>
<dbReference type="HOGENOM" id="CLU_1816927_0_0_1"/>
<dbReference type="InParanoid" id="Q10296"/>
<dbReference type="OMA" id="YAGMQYA"/>
<dbReference type="PRO" id="PR:Q10296"/>
<dbReference type="Proteomes" id="UP000002485">
    <property type="component" value="Chromosome I"/>
</dbReference>
<dbReference type="GO" id="GO:0005829">
    <property type="term" value="C:cytosol"/>
    <property type="evidence" value="ECO:0007005"/>
    <property type="project" value="PomBase"/>
</dbReference>
<dbReference type="GO" id="GO:0005634">
    <property type="term" value="C:nucleus"/>
    <property type="evidence" value="ECO:0007005"/>
    <property type="project" value="PomBase"/>
</dbReference>
<dbReference type="InterPro" id="IPR027915">
    <property type="entry name" value="DUF4452"/>
</dbReference>
<dbReference type="PANTHER" id="PTHR39615">
    <property type="entry name" value="YALI0E17897P"/>
    <property type="match status" value="1"/>
</dbReference>
<dbReference type="PANTHER" id="PTHR39615:SF1">
    <property type="entry name" value="YALI0E17897P"/>
    <property type="match status" value="1"/>
</dbReference>
<dbReference type="Pfam" id="PF14618">
    <property type="entry name" value="DUF4452"/>
    <property type="match status" value="1"/>
</dbReference>
<comment type="subcellular location">
    <subcellularLocation>
        <location evidence="1">Cytoplasm</location>
    </subcellularLocation>
    <subcellularLocation>
        <location evidence="1">Nucleus</location>
    </subcellularLocation>
</comment>